<comment type="similarity">
    <text evidence="1">Belongs to the universal ribosomal protein uL29 family.</text>
</comment>
<proteinExistence type="inferred from homology"/>
<name>RL29_FLAPJ</name>
<accession>A6GZ91</accession>
<dbReference type="EMBL" id="AM398681">
    <property type="protein sequence ID" value="CAL43414.1"/>
    <property type="molecule type" value="Genomic_DNA"/>
</dbReference>
<dbReference type="RefSeq" id="WP_011963462.1">
    <property type="nucleotide sequence ID" value="NC_009613.3"/>
</dbReference>
<dbReference type="RefSeq" id="YP_001296225.1">
    <property type="nucleotide sequence ID" value="NC_009613.3"/>
</dbReference>
<dbReference type="SMR" id="A6GZ91"/>
<dbReference type="STRING" id="402612.FP1331"/>
<dbReference type="EnsemblBacteria" id="CAL43414">
    <property type="protein sequence ID" value="CAL43414"/>
    <property type="gene ID" value="FP1331"/>
</dbReference>
<dbReference type="GeneID" id="66553234"/>
<dbReference type="KEGG" id="fps:FP1331"/>
<dbReference type="PATRIC" id="fig|402612.5.peg.1348"/>
<dbReference type="eggNOG" id="COG0255">
    <property type="taxonomic scope" value="Bacteria"/>
</dbReference>
<dbReference type="HOGENOM" id="CLU_158491_5_1_10"/>
<dbReference type="OrthoDB" id="5296761at2"/>
<dbReference type="Proteomes" id="UP000006394">
    <property type="component" value="Chromosome"/>
</dbReference>
<dbReference type="GO" id="GO:1990904">
    <property type="term" value="C:ribonucleoprotein complex"/>
    <property type="evidence" value="ECO:0007669"/>
    <property type="project" value="UniProtKB-KW"/>
</dbReference>
<dbReference type="GO" id="GO:0005840">
    <property type="term" value="C:ribosome"/>
    <property type="evidence" value="ECO:0007669"/>
    <property type="project" value="UniProtKB-KW"/>
</dbReference>
<dbReference type="GO" id="GO:0003735">
    <property type="term" value="F:structural constituent of ribosome"/>
    <property type="evidence" value="ECO:0007669"/>
    <property type="project" value="InterPro"/>
</dbReference>
<dbReference type="GO" id="GO:0006412">
    <property type="term" value="P:translation"/>
    <property type="evidence" value="ECO:0007669"/>
    <property type="project" value="UniProtKB-UniRule"/>
</dbReference>
<dbReference type="CDD" id="cd00427">
    <property type="entry name" value="Ribosomal_L29_HIP"/>
    <property type="match status" value="1"/>
</dbReference>
<dbReference type="Gene3D" id="1.10.287.310">
    <property type="match status" value="1"/>
</dbReference>
<dbReference type="HAMAP" id="MF_00374">
    <property type="entry name" value="Ribosomal_uL29"/>
    <property type="match status" value="1"/>
</dbReference>
<dbReference type="InterPro" id="IPR001854">
    <property type="entry name" value="Ribosomal_uL29"/>
</dbReference>
<dbReference type="InterPro" id="IPR018254">
    <property type="entry name" value="Ribosomal_uL29_CS"/>
</dbReference>
<dbReference type="InterPro" id="IPR036049">
    <property type="entry name" value="Ribosomal_uL29_sf"/>
</dbReference>
<dbReference type="NCBIfam" id="TIGR00012">
    <property type="entry name" value="L29"/>
    <property type="match status" value="1"/>
</dbReference>
<dbReference type="Pfam" id="PF00831">
    <property type="entry name" value="Ribosomal_L29"/>
    <property type="match status" value="1"/>
</dbReference>
<dbReference type="SUPFAM" id="SSF46561">
    <property type="entry name" value="Ribosomal protein L29 (L29p)"/>
    <property type="match status" value="1"/>
</dbReference>
<dbReference type="PROSITE" id="PS00579">
    <property type="entry name" value="RIBOSOMAL_L29"/>
    <property type="match status" value="1"/>
</dbReference>
<keyword id="KW-1185">Reference proteome</keyword>
<keyword id="KW-0687">Ribonucleoprotein</keyword>
<keyword id="KW-0689">Ribosomal protein</keyword>
<protein>
    <recommendedName>
        <fullName evidence="1">Large ribosomal subunit protein uL29</fullName>
    </recommendedName>
    <alternativeName>
        <fullName evidence="2">50S ribosomal protein L29</fullName>
    </alternativeName>
</protein>
<organism>
    <name type="scientific">Flavobacterium psychrophilum (strain ATCC 49511 / DSM 21280 / CIP 103535 / JIP02/86)</name>
    <dbReference type="NCBI Taxonomy" id="402612"/>
    <lineage>
        <taxon>Bacteria</taxon>
        <taxon>Pseudomonadati</taxon>
        <taxon>Bacteroidota</taxon>
        <taxon>Flavobacteriia</taxon>
        <taxon>Flavobacteriales</taxon>
        <taxon>Flavobacteriaceae</taxon>
        <taxon>Flavobacterium</taxon>
    </lineage>
</organism>
<evidence type="ECO:0000255" key="1">
    <source>
        <dbReference type="HAMAP-Rule" id="MF_00374"/>
    </source>
</evidence>
<evidence type="ECO:0000305" key="2"/>
<reference key="1">
    <citation type="journal article" date="2007" name="Nat. Biotechnol.">
        <title>Complete genome sequence of the fish pathogen Flavobacterium psychrophilum.</title>
        <authorList>
            <person name="Duchaud E."/>
            <person name="Boussaha M."/>
            <person name="Loux V."/>
            <person name="Bernardet J.-F."/>
            <person name="Michel C."/>
            <person name="Kerouault B."/>
            <person name="Mondot S."/>
            <person name="Nicolas P."/>
            <person name="Bossy R."/>
            <person name="Caron C."/>
            <person name="Bessieres P."/>
            <person name="Gibrat J.-F."/>
            <person name="Claverol S."/>
            <person name="Dumetz F."/>
            <person name="Le Henaff M."/>
            <person name="Benmansour A."/>
        </authorList>
    </citation>
    <scope>NUCLEOTIDE SEQUENCE [LARGE SCALE GENOMIC DNA]</scope>
    <source>
        <strain>ATCC 49511 / DSM 21280 / CIP 103535 / JIP02/86</strain>
    </source>
</reference>
<feature type="chain" id="PRO_1000007482" description="Large ribosomal subunit protein uL29">
    <location>
        <begin position="1"/>
        <end position="63"/>
    </location>
</feature>
<gene>
    <name evidence="1" type="primary">rpmC</name>
    <name type="ordered locus">FP1331</name>
</gene>
<sequence>MKQLEIKNLSAAELQAKLVQLKKTYSDIKIAHAISPIENPLQIRSLRRSVARIATEISKRELL</sequence>